<reference key="1">
    <citation type="journal article" date="1989" name="J. Biol. Chem.">
        <title>The amino acid sequences of the alpha and beta chains of hemoglobin from the snake, Liophis miliaris.</title>
        <authorList>
            <person name="Matsuura M.S.A."/>
            <person name="Fushitani K."/>
            <person name="Riggs A."/>
        </authorList>
    </citation>
    <scope>PROTEIN SEQUENCE</scope>
</reference>
<sequence>VHWTAEEKSAITAIWGKVDVAAIGGEALCRLLIVYPWTQRFFTSFGNLSNAAAIQSNAQVKAHGKKVFTAFGDAVKNPEGVKDTFAKLSELHCDKLHVDPVNFKLLGQILITVLAAHFGKDFTPNVQAAYQKLVSVVAHALAHQYH</sequence>
<accession>P16418</accession>
<gene>
    <name type="primary">HBB</name>
</gene>
<evidence type="ECO:0000255" key="1">
    <source>
        <dbReference type="PROSITE-ProRule" id="PRU00238"/>
    </source>
</evidence>
<proteinExistence type="evidence at protein level"/>
<protein>
    <recommendedName>
        <fullName>Hemoglobin subunit beta</fullName>
    </recommendedName>
    <alternativeName>
        <fullName>Beta-globin</fullName>
    </alternativeName>
    <alternativeName>
        <fullName>Hemoglobin beta chain</fullName>
    </alternativeName>
</protein>
<name>HBB_ERYML</name>
<feature type="chain" id="PRO_0000052993" description="Hemoglobin subunit beta">
    <location>
        <begin position="1"/>
        <end position="146"/>
    </location>
</feature>
<feature type="domain" description="Globin" evidence="1">
    <location>
        <begin position="2"/>
        <end position="146"/>
    </location>
</feature>
<feature type="binding site" description="distal binding residue">
    <location>
        <position position="63"/>
    </location>
    <ligand>
        <name>heme b</name>
        <dbReference type="ChEBI" id="CHEBI:60344"/>
    </ligand>
    <ligandPart>
        <name>Fe</name>
        <dbReference type="ChEBI" id="CHEBI:18248"/>
    </ligandPart>
</feature>
<feature type="binding site" description="proximal binding residue">
    <location>
        <position position="92"/>
    </location>
    <ligand>
        <name>heme b</name>
        <dbReference type="ChEBI" id="CHEBI:60344"/>
    </ligand>
    <ligandPart>
        <name>Fe</name>
        <dbReference type="ChEBI" id="CHEBI:18248"/>
    </ligandPart>
</feature>
<comment type="function">
    <text>Involved in oxygen transport from the lung to the various peripheral tissues.</text>
</comment>
<comment type="subunit">
    <text>Heterotetramer of two alpha chains and two beta chains. Oxygenation results in dissociation to dimers.</text>
</comment>
<comment type="tissue specificity">
    <text>Red blood cells.</text>
</comment>
<comment type="similarity">
    <text evidence="1">Belongs to the globin family.</text>
</comment>
<keyword id="KW-0903">Direct protein sequencing</keyword>
<keyword id="KW-0349">Heme</keyword>
<keyword id="KW-0408">Iron</keyword>
<keyword id="KW-0479">Metal-binding</keyword>
<keyword id="KW-0561">Oxygen transport</keyword>
<keyword id="KW-0813">Transport</keyword>
<organism>
    <name type="scientific">Erythrolamprus miliaris</name>
    <name type="common">South American water snake</name>
    <name type="synonym">Liophis miliaris</name>
    <dbReference type="NCBI Taxonomy" id="8582"/>
    <lineage>
        <taxon>Eukaryota</taxon>
        <taxon>Metazoa</taxon>
        <taxon>Chordata</taxon>
        <taxon>Craniata</taxon>
        <taxon>Vertebrata</taxon>
        <taxon>Euteleostomi</taxon>
        <taxon>Lepidosauria</taxon>
        <taxon>Squamata</taxon>
        <taxon>Bifurcata</taxon>
        <taxon>Unidentata</taxon>
        <taxon>Episquamata</taxon>
        <taxon>Toxicofera</taxon>
        <taxon>Serpentes</taxon>
        <taxon>Colubroidea</taxon>
        <taxon>Dipsadidae</taxon>
        <taxon>Erythrolamprus</taxon>
    </lineage>
</organism>
<dbReference type="PIR" id="B32854">
    <property type="entry name" value="B32854"/>
</dbReference>
<dbReference type="SMR" id="P16418"/>
<dbReference type="GO" id="GO:0072562">
    <property type="term" value="C:blood microparticle"/>
    <property type="evidence" value="ECO:0007669"/>
    <property type="project" value="TreeGrafter"/>
</dbReference>
<dbReference type="GO" id="GO:0031838">
    <property type="term" value="C:haptoglobin-hemoglobin complex"/>
    <property type="evidence" value="ECO:0007669"/>
    <property type="project" value="TreeGrafter"/>
</dbReference>
<dbReference type="GO" id="GO:0005833">
    <property type="term" value="C:hemoglobin complex"/>
    <property type="evidence" value="ECO:0007669"/>
    <property type="project" value="InterPro"/>
</dbReference>
<dbReference type="GO" id="GO:0031720">
    <property type="term" value="F:haptoglobin binding"/>
    <property type="evidence" value="ECO:0007669"/>
    <property type="project" value="TreeGrafter"/>
</dbReference>
<dbReference type="GO" id="GO:0020037">
    <property type="term" value="F:heme binding"/>
    <property type="evidence" value="ECO:0007669"/>
    <property type="project" value="InterPro"/>
</dbReference>
<dbReference type="GO" id="GO:0046872">
    <property type="term" value="F:metal ion binding"/>
    <property type="evidence" value="ECO:0007669"/>
    <property type="project" value="UniProtKB-KW"/>
</dbReference>
<dbReference type="GO" id="GO:0043177">
    <property type="term" value="F:organic acid binding"/>
    <property type="evidence" value="ECO:0007669"/>
    <property type="project" value="TreeGrafter"/>
</dbReference>
<dbReference type="GO" id="GO:0019825">
    <property type="term" value="F:oxygen binding"/>
    <property type="evidence" value="ECO:0007669"/>
    <property type="project" value="InterPro"/>
</dbReference>
<dbReference type="GO" id="GO:0005344">
    <property type="term" value="F:oxygen carrier activity"/>
    <property type="evidence" value="ECO:0007669"/>
    <property type="project" value="UniProtKB-KW"/>
</dbReference>
<dbReference type="GO" id="GO:0004601">
    <property type="term" value="F:peroxidase activity"/>
    <property type="evidence" value="ECO:0007669"/>
    <property type="project" value="TreeGrafter"/>
</dbReference>
<dbReference type="GO" id="GO:0042744">
    <property type="term" value="P:hydrogen peroxide catabolic process"/>
    <property type="evidence" value="ECO:0007669"/>
    <property type="project" value="TreeGrafter"/>
</dbReference>
<dbReference type="CDD" id="cd08925">
    <property type="entry name" value="Hb-beta-like"/>
    <property type="match status" value="1"/>
</dbReference>
<dbReference type="FunFam" id="1.10.490.10:FF:000001">
    <property type="entry name" value="Hemoglobin subunit beta"/>
    <property type="match status" value="1"/>
</dbReference>
<dbReference type="Gene3D" id="1.10.490.10">
    <property type="entry name" value="Globins"/>
    <property type="match status" value="1"/>
</dbReference>
<dbReference type="InterPro" id="IPR000971">
    <property type="entry name" value="Globin"/>
</dbReference>
<dbReference type="InterPro" id="IPR009050">
    <property type="entry name" value="Globin-like_sf"/>
</dbReference>
<dbReference type="InterPro" id="IPR012292">
    <property type="entry name" value="Globin/Proto"/>
</dbReference>
<dbReference type="InterPro" id="IPR002337">
    <property type="entry name" value="Hemoglobin_b"/>
</dbReference>
<dbReference type="InterPro" id="IPR050056">
    <property type="entry name" value="Hemoglobin_oxygen_transport"/>
</dbReference>
<dbReference type="PANTHER" id="PTHR11442">
    <property type="entry name" value="HEMOGLOBIN FAMILY MEMBER"/>
    <property type="match status" value="1"/>
</dbReference>
<dbReference type="PANTHER" id="PTHR11442:SF7">
    <property type="entry name" value="HEMOGLOBIN SUBUNIT EPSILON"/>
    <property type="match status" value="1"/>
</dbReference>
<dbReference type="Pfam" id="PF00042">
    <property type="entry name" value="Globin"/>
    <property type="match status" value="1"/>
</dbReference>
<dbReference type="PRINTS" id="PR00814">
    <property type="entry name" value="BETAHAEM"/>
</dbReference>
<dbReference type="SUPFAM" id="SSF46458">
    <property type="entry name" value="Globin-like"/>
    <property type="match status" value="1"/>
</dbReference>
<dbReference type="PROSITE" id="PS01033">
    <property type="entry name" value="GLOBIN"/>
    <property type="match status" value="1"/>
</dbReference>